<sequence length="610" mass="68682">MQYSHHCEHLLERLNKQREAGFLCDCTIVIGEFQFKAHRNVLASFSEYFGAIYRSTSENNVFLDQSQVKADGFQKLLEFIYTGTLNLDSWNVKEIHQAADYLKVEEVVTKCKIKMEDFAFIANPSSTEISSITGNIELNQQTCLLTLRDYNNREKSEVSTDLIQANPKQGALAKKSSQTKKKKKAFNSPKTGQNKTVQYPSDILENASVELFLDANKLPTPVVEQVAQINDNSELELTSVVENTFPAQDIVHTVTVKRKRGKSQPNCALKEHSMSNIASVKSPYEAENSGEELDQRYSKAKPMCNTCGKVFSEASSLRRHMRIHKGVKPYVCHLCGKAFTQCNQLKTHVRTHTGEKPYKCELCDKGFAQKCQLVFHSRMHHGEEKPYKCDVCNLQFATSSNLKIHARKHSGEKPYVCDRCGQRFAQASTLTYHVRRHTGEKPYVCDTCGKAFAVSSSLITHSRKHTGEKPYICGICGKSFISSGELNKHFRSHTGERPFICELCGNSYTDIKNLKKHKTKVHSGADKTLDSSAEDHTLSEQDSIQKSPLSETMDVKPSDMTLPLALPLGTEDHHMLLPVTDTQSPTSDTLLRSTVNGYSEPQLIFLQQLY</sequence>
<name>MYNN_HUMAN</name>
<proteinExistence type="evidence at protein level"/>
<feature type="chain" id="PRO_0000248217" description="Myoneurin">
    <location>
        <begin position="1"/>
        <end position="610"/>
    </location>
</feature>
<feature type="domain" description="BTB" evidence="2">
    <location>
        <begin position="24"/>
        <end position="89"/>
    </location>
</feature>
<feature type="zinc finger region" description="C2H2-type 1" evidence="3">
    <location>
        <begin position="302"/>
        <end position="324"/>
    </location>
</feature>
<feature type="zinc finger region" description="C2H2-type 2" evidence="3">
    <location>
        <begin position="330"/>
        <end position="352"/>
    </location>
</feature>
<feature type="zinc finger region" description="C2H2-type 3" evidence="3">
    <location>
        <begin position="358"/>
        <end position="381"/>
    </location>
</feature>
<feature type="zinc finger region" description="C2H2-type 4" evidence="3">
    <location>
        <begin position="387"/>
        <end position="409"/>
    </location>
</feature>
<feature type="zinc finger region" description="C2H2-type 5" evidence="3">
    <location>
        <begin position="415"/>
        <end position="437"/>
    </location>
</feature>
<feature type="zinc finger region" description="C2H2-type 6" evidence="3">
    <location>
        <begin position="443"/>
        <end position="465"/>
    </location>
</feature>
<feature type="zinc finger region" description="C2H2-type 7" evidence="3">
    <location>
        <begin position="471"/>
        <end position="493"/>
    </location>
</feature>
<feature type="zinc finger region" description="C2H2-type 8" evidence="3">
    <location>
        <begin position="499"/>
        <end position="522"/>
    </location>
</feature>
<feature type="region of interest" description="Disordered" evidence="4">
    <location>
        <begin position="169"/>
        <end position="197"/>
    </location>
</feature>
<feature type="region of interest" description="Disordered" evidence="4">
    <location>
        <begin position="521"/>
        <end position="556"/>
    </location>
</feature>
<feature type="short sequence motif" description="Nuclear localization signal" evidence="1">
    <location>
        <begin position="174"/>
        <end position="190"/>
    </location>
</feature>
<feature type="short sequence motif" description="Nuclear localization signal" evidence="1">
    <location>
        <begin position="257"/>
        <end position="262"/>
    </location>
</feature>
<feature type="compositionally biased region" description="Polar residues" evidence="4">
    <location>
        <begin position="188"/>
        <end position="197"/>
    </location>
</feature>
<feature type="compositionally biased region" description="Basic and acidic residues" evidence="4">
    <location>
        <begin position="523"/>
        <end position="539"/>
    </location>
</feature>
<feature type="compositionally biased region" description="Polar residues" evidence="4">
    <location>
        <begin position="540"/>
        <end position="550"/>
    </location>
</feature>
<feature type="modified residue" description="Phosphoserine" evidence="11 12 13">
    <location>
        <position position="289"/>
    </location>
</feature>
<feature type="splice variant" id="VSP_020213" description="In isoform 4." evidence="7 9">
    <original>SWN</original>
    <variation>RDI</variation>
    <location>
        <begin position="89"/>
        <end position="91"/>
    </location>
</feature>
<feature type="splice variant" id="VSP_020214" description="In isoform 4." evidence="7 9">
    <location>
        <begin position="92"/>
        <end position="610"/>
    </location>
</feature>
<feature type="splice variant" id="VSP_020215" description="In isoform 3." evidence="7">
    <original>GERPFI</original>
    <variation>VVWSMN</variation>
    <location>
        <begin position="495"/>
        <end position="500"/>
    </location>
</feature>
<feature type="splice variant" id="VSP_020216" description="In isoform 2." evidence="8">
    <location>
        <begin position="496"/>
        <end position="524"/>
    </location>
</feature>
<feature type="splice variant" id="VSP_020217" description="In isoform 3." evidence="7">
    <location>
        <begin position="501"/>
        <end position="610"/>
    </location>
</feature>
<feature type="sequence conflict" description="In Ref. 2; BAC55898/BAC55899." evidence="10" ref="2">
    <original>Q</original>
    <variation>R</variation>
    <location>
        <position position="198"/>
    </location>
</feature>
<feature type="sequence conflict" description="In Ref. 5; CAB61393." evidence="10" ref="5">
    <original>E</original>
    <variation>D</variation>
    <location>
        <position position="292"/>
    </location>
</feature>
<feature type="helix" evidence="14">
    <location>
        <begin position="4"/>
        <end position="20"/>
    </location>
</feature>
<feature type="strand" evidence="14">
    <location>
        <begin position="26"/>
        <end position="30"/>
    </location>
</feature>
<feature type="strand" evidence="14">
    <location>
        <begin position="33"/>
        <end position="37"/>
    </location>
</feature>
<feature type="helix" evidence="14">
    <location>
        <begin position="39"/>
        <end position="45"/>
    </location>
</feature>
<feature type="helix" evidence="14">
    <location>
        <begin position="47"/>
        <end position="53"/>
    </location>
</feature>
<feature type="turn" evidence="14">
    <location>
        <begin position="65"/>
        <end position="67"/>
    </location>
</feature>
<feature type="helix" evidence="14">
    <location>
        <begin position="70"/>
        <end position="82"/>
    </location>
</feature>
<feature type="turn" evidence="14">
    <location>
        <begin position="89"/>
        <end position="91"/>
    </location>
</feature>
<feature type="helix" evidence="14">
    <location>
        <begin position="92"/>
        <end position="101"/>
    </location>
</feature>
<feature type="helix" evidence="14">
    <location>
        <begin position="105"/>
        <end position="115"/>
    </location>
</feature>
<evidence type="ECO:0000255" key="1"/>
<evidence type="ECO:0000255" key="2">
    <source>
        <dbReference type="PROSITE-ProRule" id="PRU00037"/>
    </source>
</evidence>
<evidence type="ECO:0000255" key="3">
    <source>
        <dbReference type="PROSITE-ProRule" id="PRU00042"/>
    </source>
</evidence>
<evidence type="ECO:0000256" key="4">
    <source>
        <dbReference type="SAM" id="MobiDB-lite"/>
    </source>
</evidence>
<evidence type="ECO:0000269" key="5">
    <source>
    </source>
</evidence>
<evidence type="ECO:0000269" key="6">
    <source>
    </source>
</evidence>
<evidence type="ECO:0000303" key="7">
    <source>
    </source>
</evidence>
<evidence type="ECO:0000303" key="8">
    <source ref="2"/>
</evidence>
<evidence type="ECO:0000303" key="9">
    <source ref="3"/>
</evidence>
<evidence type="ECO:0000305" key="10"/>
<evidence type="ECO:0007744" key="11">
    <source>
    </source>
</evidence>
<evidence type="ECO:0007744" key="12">
    <source>
    </source>
</evidence>
<evidence type="ECO:0007744" key="13">
    <source>
    </source>
</evidence>
<evidence type="ECO:0007829" key="14">
    <source>
        <dbReference type="PDB" id="2VPK"/>
    </source>
</evidence>
<gene>
    <name type="primary">MYNN</name>
    <name type="synonym">OSZF</name>
    <name type="synonym">ZBTB31</name>
    <name type="ORF">SBBIZ1</name>
</gene>
<protein>
    <recommendedName>
        <fullName>Myoneurin</fullName>
    </recommendedName>
    <alternativeName>
        <fullName>Zinc finger and BTB domain-containing protein 31</fullName>
    </alternativeName>
</protein>
<reference key="1">
    <citation type="journal article" date="2000" name="Biochem. Biophys. Res. Commun.">
        <title>Myoneurin, a novel member of the BTB/POZ-zinc finger family highly expressed in human muscle.</title>
        <authorList>
            <person name="Alliel P.M."/>
            <person name="Seddiqi N."/>
            <person name="Goudou D."/>
            <person name="Cifuentes-Diaz C."/>
            <person name="Romero N."/>
            <person name="Velasco E."/>
            <person name="Rieger F."/>
            <person name="Perin J.-P."/>
        </authorList>
    </citation>
    <scope>NUCLEOTIDE SEQUENCE [GENOMIC DNA / MRNA] (ISOFORM 1)</scope>
    <scope>NUCLEOTIDE SEQUENCE [MRNA] OF 264-610 (ISOFORM 3)</scope>
    <scope>NUCLEOTIDE SEQUENCE [MRNA] OF 32-610 (ISOFORM 4)</scope>
    <scope>TISSUE SPECIFICITY</scope>
    <source>
        <tissue>Testis</tissue>
    </source>
</reference>
<reference key="2">
    <citation type="submission" date="2002-02" db="EMBL/GenBank/DDBJ databases">
        <title>Cloning and characterization of a novel human gene, OSZF, encoding a zinc finger protein with BTB/POZ domain.</title>
        <authorList>
            <person name="Ito S."/>
            <person name="Naito N."/>
            <person name="Ouchida M."/>
            <person name="Shimizu K."/>
        </authorList>
    </citation>
    <scope>NUCLEOTIDE SEQUENCE [GENOMIC DNA / MRNA] (ISOFORMS 1 AND 2)</scope>
</reference>
<reference key="3">
    <citation type="submission" date="1998-07" db="EMBL/GenBank/DDBJ databases">
        <title>A zinc finger protein SBBIZ1 expressed in human dendritic cells.</title>
        <authorList>
            <person name="Zhang W."/>
            <person name="Wan T."/>
            <person name="Yuan Z."/>
            <person name="Cao X."/>
        </authorList>
    </citation>
    <scope>NUCLEOTIDE SEQUENCE [LARGE SCALE MRNA] (ISOFORMS 1 AND 4)</scope>
    <source>
        <tissue>Dendritic cell</tissue>
    </source>
</reference>
<reference key="4">
    <citation type="journal article" date="2004" name="Nat. Genet.">
        <title>Complete sequencing and characterization of 21,243 full-length human cDNAs.</title>
        <authorList>
            <person name="Ota T."/>
            <person name="Suzuki Y."/>
            <person name="Nishikawa T."/>
            <person name="Otsuki T."/>
            <person name="Sugiyama T."/>
            <person name="Irie R."/>
            <person name="Wakamatsu A."/>
            <person name="Hayashi K."/>
            <person name="Sato H."/>
            <person name="Nagai K."/>
            <person name="Kimura K."/>
            <person name="Makita H."/>
            <person name="Sekine M."/>
            <person name="Obayashi M."/>
            <person name="Nishi T."/>
            <person name="Shibahara T."/>
            <person name="Tanaka T."/>
            <person name="Ishii S."/>
            <person name="Yamamoto J."/>
            <person name="Saito K."/>
            <person name="Kawai Y."/>
            <person name="Isono Y."/>
            <person name="Nakamura Y."/>
            <person name="Nagahari K."/>
            <person name="Murakami K."/>
            <person name="Yasuda T."/>
            <person name="Iwayanagi T."/>
            <person name="Wagatsuma M."/>
            <person name="Shiratori A."/>
            <person name="Sudo H."/>
            <person name="Hosoiri T."/>
            <person name="Kaku Y."/>
            <person name="Kodaira H."/>
            <person name="Kondo H."/>
            <person name="Sugawara M."/>
            <person name="Takahashi M."/>
            <person name="Kanda K."/>
            <person name="Yokoi T."/>
            <person name="Furuya T."/>
            <person name="Kikkawa E."/>
            <person name="Omura Y."/>
            <person name="Abe K."/>
            <person name="Kamihara K."/>
            <person name="Katsuta N."/>
            <person name="Sato K."/>
            <person name="Tanikawa M."/>
            <person name="Yamazaki M."/>
            <person name="Ninomiya K."/>
            <person name="Ishibashi T."/>
            <person name="Yamashita H."/>
            <person name="Murakawa K."/>
            <person name="Fujimori K."/>
            <person name="Tanai H."/>
            <person name="Kimata M."/>
            <person name="Watanabe M."/>
            <person name="Hiraoka S."/>
            <person name="Chiba Y."/>
            <person name="Ishida S."/>
            <person name="Ono Y."/>
            <person name="Takiguchi S."/>
            <person name="Watanabe S."/>
            <person name="Yosida M."/>
            <person name="Hotuta T."/>
            <person name="Kusano J."/>
            <person name="Kanehori K."/>
            <person name="Takahashi-Fujii A."/>
            <person name="Hara H."/>
            <person name="Tanase T.-O."/>
            <person name="Nomura Y."/>
            <person name="Togiya S."/>
            <person name="Komai F."/>
            <person name="Hara R."/>
            <person name="Takeuchi K."/>
            <person name="Arita M."/>
            <person name="Imose N."/>
            <person name="Musashino K."/>
            <person name="Yuuki H."/>
            <person name="Oshima A."/>
            <person name="Sasaki N."/>
            <person name="Aotsuka S."/>
            <person name="Yoshikawa Y."/>
            <person name="Matsunawa H."/>
            <person name="Ichihara T."/>
            <person name="Shiohata N."/>
            <person name="Sano S."/>
            <person name="Moriya S."/>
            <person name="Momiyama H."/>
            <person name="Satoh N."/>
            <person name="Takami S."/>
            <person name="Terashima Y."/>
            <person name="Suzuki O."/>
            <person name="Nakagawa S."/>
            <person name="Senoh A."/>
            <person name="Mizoguchi H."/>
            <person name="Goto Y."/>
            <person name="Shimizu F."/>
            <person name="Wakebe H."/>
            <person name="Hishigaki H."/>
            <person name="Watanabe T."/>
            <person name="Sugiyama A."/>
            <person name="Takemoto M."/>
            <person name="Kawakami B."/>
            <person name="Yamazaki M."/>
            <person name="Watanabe K."/>
            <person name="Kumagai A."/>
            <person name="Itakura S."/>
            <person name="Fukuzumi Y."/>
            <person name="Fujimori Y."/>
            <person name="Komiyama M."/>
            <person name="Tashiro H."/>
            <person name="Tanigami A."/>
            <person name="Fujiwara T."/>
            <person name="Ono T."/>
            <person name="Yamada K."/>
            <person name="Fujii Y."/>
            <person name="Ozaki K."/>
            <person name="Hirao M."/>
            <person name="Ohmori Y."/>
            <person name="Kawabata A."/>
            <person name="Hikiji T."/>
            <person name="Kobatake N."/>
            <person name="Inagaki H."/>
            <person name="Ikema Y."/>
            <person name="Okamoto S."/>
            <person name="Okitani R."/>
            <person name="Kawakami T."/>
            <person name="Noguchi S."/>
            <person name="Itoh T."/>
            <person name="Shigeta K."/>
            <person name="Senba T."/>
            <person name="Matsumura K."/>
            <person name="Nakajima Y."/>
            <person name="Mizuno T."/>
            <person name="Morinaga M."/>
            <person name="Sasaki M."/>
            <person name="Togashi T."/>
            <person name="Oyama M."/>
            <person name="Hata H."/>
            <person name="Watanabe M."/>
            <person name="Komatsu T."/>
            <person name="Mizushima-Sugano J."/>
            <person name="Satoh T."/>
            <person name="Shirai Y."/>
            <person name="Takahashi Y."/>
            <person name="Nakagawa K."/>
            <person name="Okumura K."/>
            <person name="Nagase T."/>
            <person name="Nomura N."/>
            <person name="Kikuchi H."/>
            <person name="Masuho Y."/>
            <person name="Yamashita R."/>
            <person name="Nakai K."/>
            <person name="Yada T."/>
            <person name="Nakamura Y."/>
            <person name="Ohara O."/>
            <person name="Isogai T."/>
            <person name="Sugano S."/>
        </authorList>
    </citation>
    <scope>NUCLEOTIDE SEQUENCE [LARGE SCALE MRNA] (ISOFORM 1)</scope>
    <source>
        <tissue>Embryo</tissue>
        <tissue>Thalamus</tissue>
    </source>
</reference>
<reference key="5">
    <citation type="journal article" date="2007" name="BMC Genomics">
        <title>The full-ORF clone resource of the German cDNA consortium.</title>
        <authorList>
            <person name="Bechtel S."/>
            <person name="Rosenfelder H."/>
            <person name="Duda A."/>
            <person name="Schmidt C.P."/>
            <person name="Ernst U."/>
            <person name="Wellenreuther R."/>
            <person name="Mehrle A."/>
            <person name="Schuster C."/>
            <person name="Bahr A."/>
            <person name="Bloecker H."/>
            <person name="Heubner D."/>
            <person name="Hoerlein A."/>
            <person name="Michel G."/>
            <person name="Wedler H."/>
            <person name="Koehrer K."/>
            <person name="Ottenwaelder B."/>
            <person name="Poustka A."/>
            <person name="Wiemann S."/>
            <person name="Schupp I."/>
        </authorList>
    </citation>
    <scope>NUCLEOTIDE SEQUENCE [LARGE SCALE MRNA] (ISOFORM 1)</scope>
    <source>
        <tissue>Testis</tissue>
    </source>
</reference>
<reference key="6">
    <citation type="submission" date="2005-09" db="EMBL/GenBank/DDBJ databases">
        <authorList>
            <person name="Mural R.J."/>
            <person name="Istrail S."/>
            <person name="Sutton G."/>
            <person name="Florea L."/>
            <person name="Halpern A.L."/>
            <person name="Mobarry C.M."/>
            <person name="Lippert R."/>
            <person name="Walenz B."/>
            <person name="Shatkay H."/>
            <person name="Dew I."/>
            <person name="Miller J.R."/>
            <person name="Flanigan M.J."/>
            <person name="Edwards N.J."/>
            <person name="Bolanos R."/>
            <person name="Fasulo D."/>
            <person name="Halldorsson B.V."/>
            <person name="Hannenhalli S."/>
            <person name="Turner R."/>
            <person name="Yooseph S."/>
            <person name="Lu F."/>
            <person name="Nusskern D.R."/>
            <person name="Shue B.C."/>
            <person name="Zheng X.H."/>
            <person name="Zhong F."/>
            <person name="Delcher A.L."/>
            <person name="Huson D.H."/>
            <person name="Kravitz S.A."/>
            <person name="Mouchard L."/>
            <person name="Reinert K."/>
            <person name="Remington K.A."/>
            <person name="Clark A.G."/>
            <person name="Waterman M.S."/>
            <person name="Eichler E.E."/>
            <person name="Adams M.D."/>
            <person name="Hunkapiller M.W."/>
            <person name="Myers E.W."/>
            <person name="Venter J.C."/>
        </authorList>
    </citation>
    <scope>NUCLEOTIDE SEQUENCE [LARGE SCALE GENOMIC DNA]</scope>
</reference>
<reference key="7">
    <citation type="journal article" date="2004" name="Genome Res.">
        <title>The status, quality, and expansion of the NIH full-length cDNA project: the Mammalian Gene Collection (MGC).</title>
        <authorList>
            <consortium name="The MGC Project Team"/>
        </authorList>
    </citation>
    <scope>NUCLEOTIDE SEQUENCE [LARGE SCALE MRNA] (ISOFORM 1)</scope>
    <source>
        <tissue>Lung</tissue>
    </source>
</reference>
<reference key="8">
    <citation type="journal article" date="2004" name="Muscle Nerve">
        <title>Neuromuscular expression of the BTB/POZ and zinc finger protein myoneurin.</title>
        <authorList>
            <person name="Cifuentes-Diaz C."/>
            <person name="Bitoun M."/>
            <person name="Goudou D."/>
            <person name="Seddiqi N."/>
            <person name="Romero N."/>
            <person name="Rieger F."/>
            <person name="Perin J.-P."/>
            <person name="Alliel P.M."/>
        </authorList>
    </citation>
    <scope>SUBCELLULAR LOCATION</scope>
    <scope>TISSUE SPECIFICITY</scope>
</reference>
<reference key="9">
    <citation type="journal article" date="2009" name="Sci. Signal.">
        <title>Quantitative phosphoproteomic analysis of T cell receptor signaling reveals system-wide modulation of protein-protein interactions.</title>
        <authorList>
            <person name="Mayya V."/>
            <person name="Lundgren D.H."/>
            <person name="Hwang S.-I."/>
            <person name="Rezaul K."/>
            <person name="Wu L."/>
            <person name="Eng J.K."/>
            <person name="Rodionov V."/>
            <person name="Han D.K."/>
        </authorList>
    </citation>
    <scope>PHOSPHORYLATION [LARGE SCALE ANALYSIS] AT SER-289</scope>
    <scope>IDENTIFICATION BY MASS SPECTROMETRY [LARGE SCALE ANALYSIS]</scope>
    <source>
        <tissue>Leukemic T-cell</tissue>
    </source>
</reference>
<reference key="10">
    <citation type="journal article" date="2010" name="Sci. Signal.">
        <title>Quantitative phosphoproteomics reveals widespread full phosphorylation site occupancy during mitosis.</title>
        <authorList>
            <person name="Olsen J.V."/>
            <person name="Vermeulen M."/>
            <person name="Santamaria A."/>
            <person name="Kumar C."/>
            <person name="Miller M.L."/>
            <person name="Jensen L.J."/>
            <person name="Gnad F."/>
            <person name="Cox J."/>
            <person name="Jensen T.S."/>
            <person name="Nigg E.A."/>
            <person name="Brunak S."/>
            <person name="Mann M."/>
        </authorList>
    </citation>
    <scope>PHOSPHORYLATION [LARGE SCALE ANALYSIS] AT SER-289</scope>
    <scope>IDENTIFICATION BY MASS SPECTROMETRY [LARGE SCALE ANALYSIS]</scope>
    <source>
        <tissue>Cervix carcinoma</tissue>
    </source>
</reference>
<reference key="11">
    <citation type="journal article" date="2013" name="J. Proteome Res.">
        <title>Toward a comprehensive characterization of a human cancer cell phosphoproteome.</title>
        <authorList>
            <person name="Zhou H."/>
            <person name="Di Palma S."/>
            <person name="Preisinger C."/>
            <person name="Peng M."/>
            <person name="Polat A.N."/>
            <person name="Heck A.J."/>
            <person name="Mohammed S."/>
        </authorList>
    </citation>
    <scope>PHOSPHORYLATION [LARGE SCALE ANALYSIS] AT SER-289</scope>
    <scope>IDENTIFICATION BY MASS SPECTROMETRY [LARGE SCALE ANALYSIS]</scope>
    <source>
        <tissue>Cervix carcinoma</tissue>
    </source>
</reference>
<reference key="12">
    <citation type="submission" date="2009-06" db="PDB data bank">
        <title>Crystal structure of the BTB domain of human myoneurin.</title>
        <authorList>
            <consortium name="Structural genomics consortium (SGC)"/>
        </authorList>
    </citation>
    <scope>X-RAY CRYSTALLOGRAPHY (2.0 ANGSTROMS) OF 4-117</scope>
</reference>
<dbReference type="EMBL" id="AF148848">
    <property type="protein sequence ID" value="AAF73138.1"/>
    <property type="molecule type" value="mRNA"/>
</dbReference>
<dbReference type="EMBL" id="AY286322">
    <property type="protein sequence ID" value="AAP44763.1"/>
    <property type="molecule type" value="Genomic_DNA"/>
</dbReference>
<dbReference type="EMBL" id="AY286321">
    <property type="protein sequence ID" value="AAP44763.1"/>
    <property type="status" value="JOINED"/>
    <property type="molecule type" value="Genomic_DNA"/>
</dbReference>
<dbReference type="EMBL" id="AY286328">
    <property type="protein sequence ID" value="AAP44764.1"/>
    <property type="molecule type" value="Genomic_DNA"/>
</dbReference>
<dbReference type="EMBL" id="AY286323">
    <property type="protein sequence ID" value="AAP44764.1"/>
    <property type="status" value="JOINED"/>
    <property type="molecule type" value="Genomic_DNA"/>
</dbReference>
<dbReference type="EMBL" id="AY286325">
    <property type="protein sequence ID" value="AAP44764.1"/>
    <property type="status" value="JOINED"/>
    <property type="molecule type" value="Genomic_DNA"/>
</dbReference>
<dbReference type="EMBL" id="AY286324">
    <property type="protein sequence ID" value="AAP44764.1"/>
    <property type="status" value="JOINED"/>
    <property type="molecule type" value="Genomic_DNA"/>
</dbReference>
<dbReference type="EMBL" id="AY286326">
    <property type="protein sequence ID" value="AAP44764.1"/>
    <property type="status" value="JOINED"/>
    <property type="molecule type" value="Genomic_DNA"/>
</dbReference>
<dbReference type="EMBL" id="AY286327">
    <property type="protein sequence ID" value="AAP44764.1"/>
    <property type="status" value="JOINED"/>
    <property type="molecule type" value="Genomic_DNA"/>
</dbReference>
<dbReference type="EMBL" id="AY514901">
    <property type="protein sequence ID" value="AAR99055.1"/>
    <property type="molecule type" value="mRNA"/>
</dbReference>
<dbReference type="EMBL" id="AY515294">
    <property type="protein sequence ID" value="AAR99843.1"/>
    <property type="molecule type" value="Genomic_DNA"/>
</dbReference>
<dbReference type="EMBL" id="AY515691">
    <property type="protein sequence ID" value="AAS38566.1"/>
    <property type="molecule type" value="mRNA"/>
</dbReference>
<dbReference type="EMBL" id="AY515692">
    <property type="protein sequence ID" value="AAS38567.1"/>
    <property type="molecule type" value="mRNA"/>
</dbReference>
<dbReference type="EMBL" id="AY541760">
    <property type="protein sequence ID" value="AAS87376.1"/>
    <property type="molecule type" value="mRNA"/>
</dbReference>
<dbReference type="EMBL" id="AY541761">
    <property type="protein sequence ID" value="AAS87377.1"/>
    <property type="molecule type" value="mRNA"/>
</dbReference>
<dbReference type="EMBL" id="AB079777">
    <property type="protein sequence ID" value="BAC55898.1"/>
    <property type="molecule type" value="mRNA"/>
</dbReference>
<dbReference type="EMBL" id="AB079778">
    <property type="protein sequence ID" value="BAC55899.1"/>
    <property type="molecule type" value="mRNA"/>
</dbReference>
<dbReference type="EMBL" id="AB079779">
    <property type="protein sequence ID" value="BAC55900.1"/>
    <property type="molecule type" value="Genomic_DNA"/>
</dbReference>
<dbReference type="EMBL" id="AF076249">
    <property type="protein sequence ID" value="AAF80160.1"/>
    <property type="molecule type" value="mRNA"/>
</dbReference>
<dbReference type="EMBL" id="AF155508">
    <property type="protein sequence ID" value="AAF74822.1"/>
    <property type="molecule type" value="mRNA"/>
</dbReference>
<dbReference type="EMBL" id="AK021646">
    <property type="protein sequence ID" value="BAB13862.1"/>
    <property type="molecule type" value="mRNA"/>
</dbReference>
<dbReference type="EMBL" id="AK092022">
    <property type="protein sequence ID" value="BAG52468.1"/>
    <property type="molecule type" value="mRNA"/>
</dbReference>
<dbReference type="EMBL" id="AK312527">
    <property type="protein sequence ID" value="BAG35426.1"/>
    <property type="molecule type" value="mRNA"/>
</dbReference>
<dbReference type="EMBL" id="AL133070">
    <property type="protein sequence ID" value="CAB61393.1"/>
    <property type="molecule type" value="mRNA"/>
</dbReference>
<dbReference type="EMBL" id="BX648128">
    <property type="protein sequence ID" value="CAI46035.1"/>
    <property type="molecule type" value="mRNA"/>
</dbReference>
<dbReference type="EMBL" id="CH471052">
    <property type="protein sequence ID" value="EAW78544.1"/>
    <property type="molecule type" value="Genomic_DNA"/>
</dbReference>
<dbReference type="EMBL" id="CH471052">
    <property type="protein sequence ID" value="EAW78546.1"/>
    <property type="molecule type" value="Genomic_DNA"/>
</dbReference>
<dbReference type="EMBL" id="BC033620">
    <property type="protein sequence ID" value="AAH33620.1"/>
    <property type="molecule type" value="mRNA"/>
</dbReference>
<dbReference type="CCDS" id="CCDS3207.1">
    <molecule id="Q9NPC7-1"/>
</dbReference>
<dbReference type="CCDS" id="CCDS54671.1">
    <molecule id="Q9NPC7-2"/>
</dbReference>
<dbReference type="PIR" id="JC7315">
    <property type="entry name" value="JC7315"/>
</dbReference>
<dbReference type="PIR" id="T42670">
    <property type="entry name" value="T42670"/>
</dbReference>
<dbReference type="RefSeq" id="NP_001172047.1">
    <molecule id="Q9NPC7-1"/>
    <property type="nucleotide sequence ID" value="NM_001185118.2"/>
</dbReference>
<dbReference type="RefSeq" id="NP_001172048.1">
    <molecule id="Q9NPC7-2"/>
    <property type="nucleotide sequence ID" value="NM_001185119.1"/>
</dbReference>
<dbReference type="RefSeq" id="NP_061127.1">
    <molecule id="Q9NPC7-1"/>
    <property type="nucleotide sequence ID" value="NM_018657.5"/>
</dbReference>
<dbReference type="RefSeq" id="XP_011511289.1">
    <property type="nucleotide sequence ID" value="XM_011512987.1"/>
</dbReference>
<dbReference type="RefSeq" id="XP_016862353.1">
    <property type="nucleotide sequence ID" value="XM_017006864.1"/>
</dbReference>
<dbReference type="PDB" id="2VPK">
    <property type="method" value="X-ray"/>
    <property type="resolution" value="2.00 A"/>
    <property type="chains" value="A=4-117"/>
</dbReference>
<dbReference type="PDBsum" id="2VPK"/>
<dbReference type="SMR" id="Q9NPC7"/>
<dbReference type="BioGRID" id="120982">
    <property type="interactions" value="13"/>
</dbReference>
<dbReference type="FunCoup" id="Q9NPC7">
    <property type="interactions" value="2617"/>
</dbReference>
<dbReference type="IntAct" id="Q9NPC7">
    <property type="interactions" value="21"/>
</dbReference>
<dbReference type="STRING" id="9606.ENSP00000326240"/>
<dbReference type="ChEMBL" id="CHEMBL5069362"/>
<dbReference type="iPTMnet" id="Q9NPC7"/>
<dbReference type="PhosphoSitePlus" id="Q9NPC7"/>
<dbReference type="BioMuta" id="MYNN"/>
<dbReference type="DMDM" id="74761639"/>
<dbReference type="jPOST" id="Q9NPC7"/>
<dbReference type="MassIVE" id="Q9NPC7"/>
<dbReference type="PaxDb" id="9606-ENSP00000326240"/>
<dbReference type="PeptideAtlas" id="Q9NPC7"/>
<dbReference type="ProteomicsDB" id="81968">
    <molecule id="Q9NPC7-1"/>
</dbReference>
<dbReference type="ProteomicsDB" id="81969">
    <molecule id="Q9NPC7-2"/>
</dbReference>
<dbReference type="ProteomicsDB" id="81970">
    <molecule id="Q9NPC7-3"/>
</dbReference>
<dbReference type="ProteomicsDB" id="81971">
    <molecule id="Q9NPC7-4"/>
</dbReference>
<dbReference type="Antibodypedia" id="18640">
    <property type="antibodies" value="253 antibodies from 27 providers"/>
</dbReference>
<dbReference type="DNASU" id="55892"/>
<dbReference type="Ensembl" id="ENST00000349841.10">
    <molecule id="Q9NPC7-1"/>
    <property type="protein sequence ID" value="ENSP00000326240.4"/>
    <property type="gene ID" value="ENSG00000085274.16"/>
</dbReference>
<dbReference type="Ensembl" id="ENST00000356716.8">
    <molecule id="Q9NPC7-1"/>
    <property type="protein sequence ID" value="ENSP00000349150.3"/>
    <property type="gene ID" value="ENSG00000085274.16"/>
</dbReference>
<dbReference type="Ensembl" id="ENST00000544106.5">
    <molecule id="Q9NPC7-2"/>
    <property type="protein sequence ID" value="ENSP00000440637.1"/>
    <property type="gene ID" value="ENSG00000085274.16"/>
</dbReference>
<dbReference type="Ensembl" id="ENST00000602751.5">
    <molecule id="Q9NPC7-4"/>
    <property type="protein sequence ID" value="ENSP00000473654.1"/>
    <property type="gene ID" value="ENSG00000085274.16"/>
</dbReference>
<dbReference type="GeneID" id="55892"/>
<dbReference type="KEGG" id="hsa:55892"/>
<dbReference type="MANE-Select" id="ENST00000349841.10">
    <property type="protein sequence ID" value="ENSP00000326240.4"/>
    <property type="RefSeq nucleotide sequence ID" value="NM_018657.5"/>
    <property type="RefSeq protein sequence ID" value="NP_061127.1"/>
</dbReference>
<dbReference type="UCSC" id="uc003fft.4">
    <molecule id="Q9NPC7-1"/>
    <property type="organism name" value="human"/>
</dbReference>
<dbReference type="AGR" id="HGNC:14955"/>
<dbReference type="CTD" id="55892"/>
<dbReference type="DisGeNET" id="55892"/>
<dbReference type="GeneCards" id="MYNN"/>
<dbReference type="HGNC" id="HGNC:14955">
    <property type="gene designation" value="MYNN"/>
</dbReference>
<dbReference type="HPA" id="ENSG00000085274">
    <property type="expression patterns" value="Low tissue specificity"/>
</dbReference>
<dbReference type="MIM" id="606042">
    <property type="type" value="gene"/>
</dbReference>
<dbReference type="neXtProt" id="NX_Q9NPC7"/>
<dbReference type="OpenTargets" id="ENSG00000085274"/>
<dbReference type="PharmGKB" id="PA31393"/>
<dbReference type="VEuPathDB" id="HostDB:ENSG00000085274"/>
<dbReference type="eggNOG" id="KOG1721">
    <property type="taxonomic scope" value="Eukaryota"/>
</dbReference>
<dbReference type="GeneTree" id="ENSGT00940000161266"/>
<dbReference type="HOGENOM" id="CLU_022540_1_0_1"/>
<dbReference type="InParanoid" id="Q9NPC7"/>
<dbReference type="OMA" id="RPICNIC"/>
<dbReference type="OrthoDB" id="8117402at2759"/>
<dbReference type="PAN-GO" id="Q9NPC7">
    <property type="GO annotations" value="3 GO annotations based on evolutionary models"/>
</dbReference>
<dbReference type="PhylomeDB" id="Q9NPC7"/>
<dbReference type="TreeFam" id="TF330787"/>
<dbReference type="PathwayCommons" id="Q9NPC7"/>
<dbReference type="SignaLink" id="Q9NPC7"/>
<dbReference type="BioGRID-ORCS" id="55892">
    <property type="hits" value="11 hits in 1221 CRISPR screens"/>
</dbReference>
<dbReference type="ChiTaRS" id="MYNN">
    <property type="organism name" value="human"/>
</dbReference>
<dbReference type="EvolutionaryTrace" id="Q9NPC7"/>
<dbReference type="GenomeRNAi" id="55892"/>
<dbReference type="Pharos" id="Q9NPC7">
    <property type="development level" value="Tbio"/>
</dbReference>
<dbReference type="PRO" id="PR:Q9NPC7"/>
<dbReference type="Proteomes" id="UP000005640">
    <property type="component" value="Chromosome 3"/>
</dbReference>
<dbReference type="RNAct" id="Q9NPC7">
    <property type="molecule type" value="protein"/>
</dbReference>
<dbReference type="Bgee" id="ENSG00000085274">
    <property type="expression patterns" value="Expressed in buccal mucosa cell and 196 other cell types or tissues"/>
</dbReference>
<dbReference type="ExpressionAtlas" id="Q9NPC7">
    <property type="expression patterns" value="baseline and differential"/>
</dbReference>
<dbReference type="GO" id="GO:0005654">
    <property type="term" value="C:nucleoplasm"/>
    <property type="evidence" value="ECO:0000314"/>
    <property type="project" value="HPA"/>
</dbReference>
<dbReference type="GO" id="GO:0000981">
    <property type="term" value="F:DNA-binding transcription factor activity, RNA polymerase II-specific"/>
    <property type="evidence" value="ECO:0000318"/>
    <property type="project" value="GO_Central"/>
</dbReference>
<dbReference type="GO" id="GO:0000978">
    <property type="term" value="F:RNA polymerase II cis-regulatory region sequence-specific DNA binding"/>
    <property type="evidence" value="ECO:0000318"/>
    <property type="project" value="GO_Central"/>
</dbReference>
<dbReference type="GO" id="GO:0008270">
    <property type="term" value="F:zinc ion binding"/>
    <property type="evidence" value="ECO:0007669"/>
    <property type="project" value="UniProtKB-KW"/>
</dbReference>
<dbReference type="GO" id="GO:1990830">
    <property type="term" value="P:cellular response to leukemia inhibitory factor"/>
    <property type="evidence" value="ECO:0007669"/>
    <property type="project" value="Ensembl"/>
</dbReference>
<dbReference type="GO" id="GO:0006357">
    <property type="term" value="P:regulation of transcription by RNA polymerase II"/>
    <property type="evidence" value="ECO:0000318"/>
    <property type="project" value="GO_Central"/>
</dbReference>
<dbReference type="CDD" id="cd18217">
    <property type="entry name" value="BTB_POZ_ZBTB31_myoneurin"/>
    <property type="match status" value="1"/>
</dbReference>
<dbReference type="FunFam" id="3.30.160.60:FF:000029">
    <property type="entry name" value="GLI family zinc finger 4"/>
    <property type="match status" value="1"/>
</dbReference>
<dbReference type="FunFam" id="3.30.160.60:FF:000678">
    <property type="entry name" value="Myoneurin isoform X1"/>
    <property type="match status" value="1"/>
</dbReference>
<dbReference type="FunFam" id="3.30.160.60:FF:000472">
    <property type="entry name" value="myoneurin isoform X1"/>
    <property type="match status" value="1"/>
</dbReference>
<dbReference type="FunFam" id="3.30.160.60:FF:000816">
    <property type="entry name" value="myoneurin isoform X1"/>
    <property type="match status" value="1"/>
</dbReference>
<dbReference type="FunFam" id="3.30.160.60:FF:000871">
    <property type="entry name" value="myoneurin isoform X1"/>
    <property type="match status" value="1"/>
</dbReference>
<dbReference type="FunFam" id="3.30.160.60:FF:001185">
    <property type="entry name" value="myoneurin isoform X1"/>
    <property type="match status" value="1"/>
</dbReference>
<dbReference type="FunFam" id="3.30.710.10:FF:000051">
    <property type="entry name" value="myoneurin isoform X1"/>
    <property type="match status" value="1"/>
</dbReference>
<dbReference type="FunFam" id="3.30.160.60:FF:000267">
    <property type="entry name" value="Zinc finger and BTB domain-containing 49"/>
    <property type="match status" value="1"/>
</dbReference>
<dbReference type="FunFam" id="3.30.160.60:FF:002586">
    <property type="entry name" value="Zinc finger protein 787"/>
    <property type="match status" value="1"/>
</dbReference>
<dbReference type="Gene3D" id="3.30.160.60">
    <property type="entry name" value="Classic Zinc Finger"/>
    <property type="match status" value="8"/>
</dbReference>
<dbReference type="Gene3D" id="3.30.710.10">
    <property type="entry name" value="Potassium Channel Kv1.1, Chain A"/>
    <property type="match status" value="1"/>
</dbReference>
<dbReference type="InterPro" id="IPR000210">
    <property type="entry name" value="BTB/POZ_dom"/>
</dbReference>
<dbReference type="InterPro" id="IPR011333">
    <property type="entry name" value="SKP1/BTB/POZ_sf"/>
</dbReference>
<dbReference type="InterPro" id="IPR036236">
    <property type="entry name" value="Znf_C2H2_sf"/>
</dbReference>
<dbReference type="InterPro" id="IPR013087">
    <property type="entry name" value="Znf_C2H2_type"/>
</dbReference>
<dbReference type="PANTHER" id="PTHR24394:SF29">
    <property type="entry name" value="MYONEURIN"/>
    <property type="match status" value="1"/>
</dbReference>
<dbReference type="PANTHER" id="PTHR24394">
    <property type="entry name" value="ZINC FINGER PROTEIN"/>
    <property type="match status" value="1"/>
</dbReference>
<dbReference type="Pfam" id="PF00651">
    <property type="entry name" value="BTB"/>
    <property type="match status" value="1"/>
</dbReference>
<dbReference type="Pfam" id="PF00096">
    <property type="entry name" value="zf-C2H2"/>
    <property type="match status" value="6"/>
</dbReference>
<dbReference type="Pfam" id="PF13912">
    <property type="entry name" value="zf-C2H2_6"/>
    <property type="match status" value="1"/>
</dbReference>
<dbReference type="SMART" id="SM00225">
    <property type="entry name" value="BTB"/>
    <property type="match status" value="1"/>
</dbReference>
<dbReference type="SMART" id="SM00355">
    <property type="entry name" value="ZnF_C2H2"/>
    <property type="match status" value="8"/>
</dbReference>
<dbReference type="SUPFAM" id="SSF57667">
    <property type="entry name" value="beta-beta-alpha zinc fingers"/>
    <property type="match status" value="5"/>
</dbReference>
<dbReference type="SUPFAM" id="SSF54695">
    <property type="entry name" value="POZ domain"/>
    <property type="match status" value="1"/>
</dbReference>
<dbReference type="PROSITE" id="PS50097">
    <property type="entry name" value="BTB"/>
    <property type="match status" value="1"/>
</dbReference>
<dbReference type="PROSITE" id="PS00028">
    <property type="entry name" value="ZINC_FINGER_C2H2_1"/>
    <property type="match status" value="8"/>
</dbReference>
<dbReference type="PROSITE" id="PS50157">
    <property type="entry name" value="ZINC_FINGER_C2H2_2"/>
    <property type="match status" value="8"/>
</dbReference>
<organism>
    <name type="scientific">Homo sapiens</name>
    <name type="common">Human</name>
    <dbReference type="NCBI Taxonomy" id="9606"/>
    <lineage>
        <taxon>Eukaryota</taxon>
        <taxon>Metazoa</taxon>
        <taxon>Chordata</taxon>
        <taxon>Craniata</taxon>
        <taxon>Vertebrata</taxon>
        <taxon>Euteleostomi</taxon>
        <taxon>Mammalia</taxon>
        <taxon>Eutheria</taxon>
        <taxon>Euarchontoglires</taxon>
        <taxon>Primates</taxon>
        <taxon>Haplorrhini</taxon>
        <taxon>Catarrhini</taxon>
        <taxon>Hominidae</taxon>
        <taxon>Homo</taxon>
    </lineage>
</organism>
<accession>Q9NPC7</accession>
<accession>B2R6C9</accession>
<accession>Q6QHA6</accession>
<accession>Q6QHA7</accession>
<accession>Q6R3G1</accession>
<accession>Q6R3G2</accession>
<accession>Q6R4A0</accession>
<accession>Q7Z716</accession>
<accession>Q7Z717</accession>
<accession>Q86Z11</accession>
<accession>Q86Z12</accession>
<accession>Q9NS01</accession>
<accession>Q9UIW8</accession>
<keyword id="KW-0002">3D-structure</keyword>
<keyword id="KW-0025">Alternative splicing</keyword>
<keyword id="KW-0238">DNA-binding</keyword>
<keyword id="KW-0479">Metal-binding</keyword>
<keyword id="KW-0539">Nucleus</keyword>
<keyword id="KW-0597">Phosphoprotein</keyword>
<keyword id="KW-1267">Proteomics identification</keyword>
<keyword id="KW-1185">Reference proteome</keyword>
<keyword id="KW-0677">Repeat</keyword>
<keyword id="KW-0804">Transcription</keyword>
<keyword id="KW-0805">Transcription regulation</keyword>
<keyword id="KW-0862">Zinc</keyword>
<keyword id="KW-0863">Zinc-finger</keyword>
<comment type="interaction">
    <interactant intactId="EBI-3446748">
        <id>Q9NPC7</id>
    </interactant>
    <interactant intactId="EBI-762428">
        <id>Q92688</id>
        <label>ANP32B</label>
    </interactant>
    <organismsDiffer>false</organismsDiffer>
    <experiments>3</experiments>
</comment>
<comment type="interaction">
    <interactant intactId="EBI-3446748">
        <id>Q9NPC7</id>
    </interactant>
    <interactant intactId="EBI-1049597">
        <id>P27797</id>
        <label>CALR</label>
    </interactant>
    <organismsDiffer>false</organismsDiffer>
    <experiments>3</experiments>
</comment>
<comment type="interaction">
    <interactant intactId="EBI-3446748">
        <id>Q9NPC7</id>
    </interactant>
    <interactant intactId="EBI-727477">
        <id>P12830</id>
        <label>CDH1</label>
    </interactant>
    <organismsDiffer>false</organismsDiffer>
    <experiments>3</experiments>
</comment>
<comment type="interaction">
    <interactant intactId="EBI-3446748">
        <id>Q9NPC7</id>
    </interactant>
    <interactant intactId="EBI-746189">
        <id>Q15078</id>
        <label>CDK5R1</label>
    </interactant>
    <organismsDiffer>false</organismsDiffer>
    <experiments>3</experiments>
</comment>
<comment type="interaction">
    <interactant intactId="EBI-3446748">
        <id>Q9NPC7</id>
    </interactant>
    <interactant intactId="EBI-351007">
        <id>P36957</id>
        <label>DLST</label>
    </interactant>
    <organismsDiffer>false</organismsDiffer>
    <experiments>3</experiments>
</comment>
<comment type="interaction">
    <interactant intactId="EBI-3446748">
        <id>Q9NPC7</id>
    </interactant>
    <interactant intactId="EBI-10976677">
        <id>G5E9A7</id>
        <label>DMWD</label>
    </interactant>
    <organismsDiffer>false</organismsDiffer>
    <experiments>3</experiments>
</comment>
<comment type="interaction">
    <interactant intactId="EBI-3446748">
        <id>Q9NPC7</id>
    </interactant>
    <interactant intactId="EBI-10297077">
        <id>Q9BRP7</id>
        <label>FDXACB1</label>
    </interactant>
    <organismsDiffer>false</organismsDiffer>
    <experiments>3</experiments>
</comment>
<comment type="interaction">
    <interactant intactId="EBI-3446748">
        <id>Q9NPC7</id>
    </interactant>
    <interactant intactId="EBI-747754">
        <id>P28799</id>
        <label>GRN</label>
    </interactant>
    <organismsDiffer>false</organismsDiffer>
    <experiments>3</experiments>
</comment>
<comment type="interaction">
    <interactant intactId="EBI-3446748">
        <id>Q9NPC7</id>
    </interactant>
    <interactant intactId="EBI-1055254">
        <id>Q8WXH2</id>
        <label>JPH3</label>
    </interactant>
    <organismsDiffer>false</organismsDiffer>
    <experiments>3</experiments>
</comment>
<comment type="interaction">
    <interactant intactId="EBI-3446748">
        <id>Q9NPC7</id>
    </interactant>
    <interactant intactId="EBI-10975473">
        <id>O60333-2</id>
        <label>KIF1B</label>
    </interactant>
    <organismsDiffer>false</organismsDiffer>
    <experiments>3</experiments>
</comment>
<comment type="interaction">
    <interactant intactId="EBI-3446748">
        <id>Q9NPC7</id>
    </interactant>
    <interactant intactId="EBI-1055945">
        <id>Q8TDX7</id>
        <label>NEK7</label>
    </interactant>
    <organismsDiffer>false</organismsDiffer>
    <experiments>3</experiments>
</comment>
<comment type="interaction">
    <interactant intactId="EBI-3446748">
        <id>Q9NPC7</id>
    </interactant>
    <interactant intactId="EBI-21251460">
        <id>O60260-5</id>
        <label>PRKN</label>
    </interactant>
    <organismsDiffer>false</organismsDiffer>
    <experiments>3</experiments>
</comment>
<comment type="interaction">
    <interactant intactId="EBI-3446748">
        <id>Q9NPC7</id>
    </interactant>
    <interactant intactId="EBI-350723">
        <id>P50454</id>
        <label>SERPINH1</label>
    </interactant>
    <organismsDiffer>false</organismsDiffer>
    <experiments>3</experiments>
</comment>
<comment type="interaction">
    <interactant intactId="EBI-3446748">
        <id>Q9NPC7</id>
    </interactant>
    <interactant intactId="EBI-296151">
        <id>P37173</id>
        <label>TGFBR2</label>
    </interactant>
    <organismsDiffer>false</organismsDiffer>
    <experiments>3</experiments>
</comment>
<comment type="subcellular location">
    <subcellularLocation>
        <location evidence="6">Nucleus</location>
    </subcellularLocation>
</comment>
<comment type="alternative products">
    <event type="alternative splicing"/>
    <isoform>
        <id>Q9NPC7-1</id>
        <name>1</name>
        <sequence type="displayed"/>
    </isoform>
    <isoform>
        <id>Q9NPC7-2</id>
        <name>2</name>
        <sequence type="described" ref="VSP_020216"/>
    </isoform>
    <isoform>
        <id>Q9NPC7-3</id>
        <name>3</name>
        <sequence type="described" ref="VSP_020215 VSP_020217"/>
    </isoform>
    <isoform>
        <id>Q9NPC7-4</id>
        <name>4</name>
        <name>m4b</name>
        <sequence type="described" ref="VSP_020213 VSP_020214"/>
    </isoform>
</comment>
<comment type="tissue specificity">
    <text evidence="5 6">Mainly expressed in the neuromuscular system. Located in and around synaptic myonuclei in adult muscle. Expression is dysregulated after nerve injury. Also found in the testis, ovary and placenta.</text>
</comment>
<comment type="similarity">
    <text evidence="10">Belongs to the krueppel C2H2-type zinc-finger protein family.</text>
</comment>